<gene>
    <name evidence="1" type="primary">argB</name>
    <name type="ordered locus">GbCGDNIH1_0734</name>
</gene>
<organism>
    <name type="scientific">Granulibacter bethesdensis (strain ATCC BAA-1260 / CGDNIH1)</name>
    <dbReference type="NCBI Taxonomy" id="391165"/>
    <lineage>
        <taxon>Bacteria</taxon>
        <taxon>Pseudomonadati</taxon>
        <taxon>Pseudomonadota</taxon>
        <taxon>Alphaproteobacteria</taxon>
        <taxon>Acetobacterales</taxon>
        <taxon>Acetobacteraceae</taxon>
        <taxon>Granulibacter</taxon>
    </lineage>
</organism>
<comment type="function">
    <text evidence="1">Catalyzes the ATP-dependent phosphorylation of N-acetyl-L-glutamate.</text>
</comment>
<comment type="catalytic activity">
    <reaction evidence="1">
        <text>N-acetyl-L-glutamate + ATP = N-acetyl-L-glutamyl 5-phosphate + ADP</text>
        <dbReference type="Rhea" id="RHEA:14629"/>
        <dbReference type="ChEBI" id="CHEBI:30616"/>
        <dbReference type="ChEBI" id="CHEBI:44337"/>
        <dbReference type="ChEBI" id="CHEBI:57936"/>
        <dbReference type="ChEBI" id="CHEBI:456216"/>
        <dbReference type="EC" id="2.7.2.8"/>
    </reaction>
</comment>
<comment type="pathway">
    <text evidence="1">Amino-acid biosynthesis; L-arginine biosynthesis; N(2)-acetyl-L-ornithine from L-glutamate: step 2/4.</text>
</comment>
<comment type="subcellular location">
    <subcellularLocation>
        <location evidence="1">Cytoplasm</location>
    </subcellularLocation>
</comment>
<comment type="similarity">
    <text evidence="1">Belongs to the acetylglutamate kinase family. ArgB subfamily.</text>
</comment>
<comment type="sequence caution" evidence="2">
    <conflict type="erroneous initiation">
        <sequence resource="EMBL-CDS" id="ABI61632"/>
    </conflict>
</comment>
<proteinExistence type="inferred from homology"/>
<protein>
    <recommendedName>
        <fullName evidence="1">Acetylglutamate kinase</fullName>
        <ecNumber evidence="1">2.7.2.8</ecNumber>
    </recommendedName>
    <alternativeName>
        <fullName evidence="1">N-acetyl-L-glutamate 5-phosphotransferase</fullName>
    </alternativeName>
    <alternativeName>
        <fullName evidence="1">NAG kinase</fullName>
        <shortName evidence="1">NAGK</shortName>
    </alternativeName>
</protein>
<name>ARGB_GRABC</name>
<sequence>MNTDDFGSAGEQARILAHALPFMRRYAGATVVVKYGGHAMGDERLAEQFGADIALLKQVGINPVVVHGGGPQINDMLKRLAIQSRFVDGLRVTDAAMVEVVEMVLAGTVNKMVAGLINRAGAMAVGICGKDGGLIHARKLQRTAIDPDSHIEKALDLGFVGEPAHIDVRVIHALTGAGLIPVIAPVGIGEDGQTYNINADSAAGAIAGALGAKRLLMLTDVPGVLDTDKKLIPEMSAADVKAGIADGTITGGMIPKVECCVDAVEKGVRGAVILDGRQPHACLLEMFTEGGIGTLIRG</sequence>
<reference key="1">
    <citation type="journal article" date="2007" name="J. Bacteriol.">
        <title>Genome sequence analysis of the emerging human pathogenic acetic acid bacterium Granulibacter bethesdensis.</title>
        <authorList>
            <person name="Greenberg D.E."/>
            <person name="Porcella S.F."/>
            <person name="Zelazny A.M."/>
            <person name="Virtaneva K."/>
            <person name="Sturdevant D.E."/>
            <person name="Kupko J.J. III"/>
            <person name="Barbian K.D."/>
            <person name="Babar A."/>
            <person name="Dorward D.W."/>
            <person name="Holland S.M."/>
        </authorList>
    </citation>
    <scope>NUCLEOTIDE SEQUENCE [LARGE SCALE GENOMIC DNA]</scope>
    <source>
        <strain>ATCC BAA-1260 / CGDNIH1</strain>
    </source>
</reference>
<dbReference type="EC" id="2.7.2.8" evidence="1"/>
<dbReference type="EMBL" id="CP000394">
    <property type="protein sequence ID" value="ABI61632.1"/>
    <property type="status" value="ALT_INIT"/>
    <property type="molecule type" value="Genomic_DNA"/>
</dbReference>
<dbReference type="SMR" id="Q0BU70"/>
<dbReference type="STRING" id="391165.GbCGDNIH1_0734"/>
<dbReference type="KEGG" id="gbe:GbCGDNIH1_0734"/>
<dbReference type="eggNOG" id="COG0548">
    <property type="taxonomic scope" value="Bacteria"/>
</dbReference>
<dbReference type="HOGENOM" id="CLU_053680_0_0_5"/>
<dbReference type="UniPathway" id="UPA00068">
    <property type="reaction ID" value="UER00107"/>
</dbReference>
<dbReference type="Proteomes" id="UP000001963">
    <property type="component" value="Chromosome"/>
</dbReference>
<dbReference type="GO" id="GO:0005737">
    <property type="term" value="C:cytoplasm"/>
    <property type="evidence" value="ECO:0007669"/>
    <property type="project" value="UniProtKB-SubCell"/>
</dbReference>
<dbReference type="GO" id="GO:0003991">
    <property type="term" value="F:acetylglutamate kinase activity"/>
    <property type="evidence" value="ECO:0007669"/>
    <property type="project" value="UniProtKB-UniRule"/>
</dbReference>
<dbReference type="GO" id="GO:0005524">
    <property type="term" value="F:ATP binding"/>
    <property type="evidence" value="ECO:0007669"/>
    <property type="project" value="UniProtKB-UniRule"/>
</dbReference>
<dbReference type="GO" id="GO:0042450">
    <property type="term" value="P:arginine biosynthetic process via ornithine"/>
    <property type="evidence" value="ECO:0007669"/>
    <property type="project" value="UniProtKB-UniRule"/>
</dbReference>
<dbReference type="GO" id="GO:0006526">
    <property type="term" value="P:L-arginine biosynthetic process"/>
    <property type="evidence" value="ECO:0007669"/>
    <property type="project" value="UniProtKB-UniPathway"/>
</dbReference>
<dbReference type="CDD" id="cd04250">
    <property type="entry name" value="AAK_NAGK-C"/>
    <property type="match status" value="1"/>
</dbReference>
<dbReference type="FunFam" id="3.40.1160.10:FF:000004">
    <property type="entry name" value="Acetylglutamate kinase"/>
    <property type="match status" value="1"/>
</dbReference>
<dbReference type="Gene3D" id="3.40.1160.10">
    <property type="entry name" value="Acetylglutamate kinase-like"/>
    <property type="match status" value="1"/>
</dbReference>
<dbReference type="HAMAP" id="MF_00082">
    <property type="entry name" value="ArgB"/>
    <property type="match status" value="1"/>
</dbReference>
<dbReference type="InterPro" id="IPR036393">
    <property type="entry name" value="AceGlu_kinase-like_sf"/>
</dbReference>
<dbReference type="InterPro" id="IPR004662">
    <property type="entry name" value="AcgluKinase_fam"/>
</dbReference>
<dbReference type="InterPro" id="IPR037528">
    <property type="entry name" value="ArgB"/>
</dbReference>
<dbReference type="InterPro" id="IPR001048">
    <property type="entry name" value="Asp/Glu/Uridylate_kinase"/>
</dbReference>
<dbReference type="InterPro" id="IPR001057">
    <property type="entry name" value="Glu/AcGlu_kinase"/>
</dbReference>
<dbReference type="InterPro" id="IPR041727">
    <property type="entry name" value="NAGK-C"/>
</dbReference>
<dbReference type="NCBIfam" id="TIGR00761">
    <property type="entry name" value="argB"/>
    <property type="match status" value="1"/>
</dbReference>
<dbReference type="PANTHER" id="PTHR23342">
    <property type="entry name" value="N-ACETYLGLUTAMATE SYNTHASE"/>
    <property type="match status" value="1"/>
</dbReference>
<dbReference type="PANTHER" id="PTHR23342:SF0">
    <property type="entry name" value="N-ACETYLGLUTAMATE SYNTHASE, MITOCHONDRIAL"/>
    <property type="match status" value="1"/>
</dbReference>
<dbReference type="Pfam" id="PF00696">
    <property type="entry name" value="AA_kinase"/>
    <property type="match status" value="1"/>
</dbReference>
<dbReference type="PIRSF" id="PIRSF000728">
    <property type="entry name" value="NAGK"/>
    <property type="match status" value="1"/>
</dbReference>
<dbReference type="PRINTS" id="PR00474">
    <property type="entry name" value="GLU5KINASE"/>
</dbReference>
<dbReference type="SUPFAM" id="SSF53633">
    <property type="entry name" value="Carbamate kinase-like"/>
    <property type="match status" value="1"/>
</dbReference>
<evidence type="ECO:0000255" key="1">
    <source>
        <dbReference type="HAMAP-Rule" id="MF_00082"/>
    </source>
</evidence>
<evidence type="ECO:0000305" key="2"/>
<keyword id="KW-0028">Amino-acid biosynthesis</keyword>
<keyword id="KW-0055">Arginine biosynthesis</keyword>
<keyword id="KW-0067">ATP-binding</keyword>
<keyword id="KW-0963">Cytoplasm</keyword>
<keyword id="KW-0418">Kinase</keyword>
<keyword id="KW-0547">Nucleotide-binding</keyword>
<keyword id="KW-1185">Reference proteome</keyword>
<keyword id="KW-0808">Transferase</keyword>
<accession>Q0BU70</accession>
<feature type="chain" id="PRO_0000264712" description="Acetylglutamate kinase">
    <location>
        <begin position="1"/>
        <end position="298"/>
    </location>
</feature>
<feature type="binding site" evidence="1">
    <location>
        <begin position="69"/>
        <end position="70"/>
    </location>
    <ligand>
        <name>substrate</name>
    </ligand>
</feature>
<feature type="binding site" evidence="1">
    <location>
        <position position="91"/>
    </location>
    <ligand>
        <name>substrate</name>
    </ligand>
</feature>
<feature type="binding site" evidence="1">
    <location>
        <position position="196"/>
    </location>
    <ligand>
        <name>substrate</name>
    </ligand>
</feature>
<feature type="site" description="Transition state stabilizer" evidence="1">
    <location>
        <position position="34"/>
    </location>
</feature>
<feature type="site" description="Transition state stabilizer" evidence="1">
    <location>
        <position position="256"/>
    </location>
</feature>